<dbReference type="EC" id="3.1.3.71"/>
<dbReference type="EMBL" id="BA000011">
    <property type="protein sequence ID" value="BAB59237.1"/>
    <property type="molecule type" value="Genomic_DNA"/>
</dbReference>
<dbReference type="RefSeq" id="WP_010916352.1">
    <property type="nucleotide sequence ID" value="NC_002689.2"/>
</dbReference>
<dbReference type="SMR" id="Q97CK6"/>
<dbReference type="STRING" id="273116.gene:9380863"/>
<dbReference type="PaxDb" id="273116-14324309"/>
<dbReference type="GeneID" id="1441582"/>
<dbReference type="KEGG" id="tvo:TVG0100132"/>
<dbReference type="eggNOG" id="arCOG04871">
    <property type="taxonomic scope" value="Archaea"/>
</dbReference>
<dbReference type="HOGENOM" id="CLU_070028_0_0_2"/>
<dbReference type="OrthoDB" id="146693at2157"/>
<dbReference type="PhylomeDB" id="Q97CK6"/>
<dbReference type="Proteomes" id="UP000001017">
    <property type="component" value="Chromosome"/>
</dbReference>
<dbReference type="GO" id="GO:0050532">
    <property type="term" value="F:2-phosphosulfolactate phosphatase activity"/>
    <property type="evidence" value="ECO:0007669"/>
    <property type="project" value="UniProtKB-UniRule"/>
</dbReference>
<dbReference type="GO" id="GO:0000287">
    <property type="term" value="F:magnesium ion binding"/>
    <property type="evidence" value="ECO:0007669"/>
    <property type="project" value="UniProtKB-UniRule"/>
</dbReference>
<dbReference type="GO" id="GO:0050545">
    <property type="term" value="F:sulfopyruvate decarboxylase activity"/>
    <property type="evidence" value="ECO:0007669"/>
    <property type="project" value="TreeGrafter"/>
</dbReference>
<dbReference type="Gene3D" id="3.90.1560.10">
    <property type="entry name" value="ComB-like"/>
    <property type="match status" value="1"/>
</dbReference>
<dbReference type="HAMAP" id="MF_00490">
    <property type="entry name" value="ComB"/>
    <property type="match status" value="1"/>
</dbReference>
<dbReference type="InterPro" id="IPR005238">
    <property type="entry name" value="ComB-like"/>
</dbReference>
<dbReference type="InterPro" id="IPR036702">
    <property type="entry name" value="ComB-like_sf"/>
</dbReference>
<dbReference type="NCBIfam" id="NF002057">
    <property type="entry name" value="PRK00886.1-6"/>
    <property type="match status" value="1"/>
</dbReference>
<dbReference type="PANTHER" id="PTHR37311">
    <property type="entry name" value="2-PHOSPHOSULFOLACTATE PHOSPHATASE-RELATED"/>
    <property type="match status" value="1"/>
</dbReference>
<dbReference type="PANTHER" id="PTHR37311:SF1">
    <property type="entry name" value="2-PHOSPHOSULFOLACTATE PHOSPHATASE-RELATED"/>
    <property type="match status" value="1"/>
</dbReference>
<dbReference type="Pfam" id="PF04029">
    <property type="entry name" value="2-ph_phosp"/>
    <property type="match status" value="1"/>
</dbReference>
<dbReference type="SUPFAM" id="SSF142823">
    <property type="entry name" value="ComB-like"/>
    <property type="match status" value="1"/>
</dbReference>
<reference key="1">
    <citation type="journal article" date="2000" name="Proc. Natl. Acad. Sci. U.S.A.">
        <title>Archaeal adaptation to higher temperatures revealed by genomic sequence of Thermoplasma volcanium.</title>
        <authorList>
            <person name="Kawashima T."/>
            <person name="Amano N."/>
            <person name="Koike H."/>
            <person name="Makino S."/>
            <person name="Higuchi S."/>
            <person name="Kawashima-Ohya Y."/>
            <person name="Watanabe K."/>
            <person name="Yamazaki M."/>
            <person name="Kanehori K."/>
            <person name="Kawamoto T."/>
            <person name="Nunoshiba T."/>
            <person name="Yamamoto Y."/>
            <person name="Aramaki H."/>
            <person name="Makino K."/>
            <person name="Suzuki M."/>
        </authorList>
    </citation>
    <scope>NUCLEOTIDE SEQUENCE [LARGE SCALE GENOMIC DNA]</scope>
    <source>
        <strain>ATCC 51530 / DSM 4299 / JCM 9571 / NBRC 15438 / GSS1</strain>
    </source>
</reference>
<evidence type="ECO:0000250" key="1"/>
<evidence type="ECO:0000305" key="2"/>
<protein>
    <recommendedName>
        <fullName>Probable 2-phosphosulfolactate phosphatase</fullName>
        <ecNumber>3.1.3.71</ecNumber>
    </recommendedName>
</protein>
<comment type="catalytic activity">
    <reaction>
        <text>(2R)-O-phospho-3-sulfolactate + H2O = (2R)-3-sulfolactate + phosphate</text>
        <dbReference type="Rhea" id="RHEA:23416"/>
        <dbReference type="ChEBI" id="CHEBI:15377"/>
        <dbReference type="ChEBI" id="CHEBI:15597"/>
        <dbReference type="ChEBI" id="CHEBI:43474"/>
        <dbReference type="ChEBI" id="CHEBI:58738"/>
        <dbReference type="EC" id="3.1.3.71"/>
    </reaction>
</comment>
<comment type="cofactor">
    <cofactor evidence="1">
        <name>Mg(2+)</name>
        <dbReference type="ChEBI" id="CHEBI:18420"/>
    </cofactor>
</comment>
<comment type="similarity">
    <text evidence="2">Belongs to the ComB family.</text>
</comment>
<name>COMB_THEVO</name>
<organism>
    <name type="scientific">Thermoplasma volcanium (strain ATCC 51530 / DSM 4299 / JCM 9571 / NBRC 15438 / GSS1)</name>
    <dbReference type="NCBI Taxonomy" id="273116"/>
    <lineage>
        <taxon>Archaea</taxon>
        <taxon>Methanobacteriati</taxon>
        <taxon>Thermoplasmatota</taxon>
        <taxon>Thermoplasmata</taxon>
        <taxon>Thermoplasmatales</taxon>
        <taxon>Thermoplasmataceae</taxon>
        <taxon>Thermoplasma</taxon>
    </lineage>
</organism>
<accession>Q97CK6</accession>
<sequence length="212" mass="23936">MIRIADGRKEENWSSINIIIDIFRSTTTIPVILSRGARYIVPFKDVTSALNFKRKNKNVVLIGEKYGIKPPFFDYDNSPAQIINADLEGKIIAFTSTNGMYVLSRIKRGRILFSSLVNMSATIKKVKGKDDILVVPSNRPIGKAVEDNIFAEMLKLALEGKNYDREILVNRIRETKENTVVSISTQDLEICLKLDLLDCVPEYIEGKIVNDP</sequence>
<gene>
    <name type="primary">comB</name>
    <name type="ordered locus">TV0095</name>
    <name type="ORF">TVG0100132</name>
</gene>
<feature type="chain" id="PRO_0000081462" description="Probable 2-phosphosulfolactate phosphatase">
    <location>
        <begin position="1"/>
        <end position="212"/>
    </location>
</feature>
<keyword id="KW-0378">Hydrolase</keyword>
<keyword id="KW-0460">Magnesium</keyword>
<proteinExistence type="inferred from homology"/>